<organism>
    <name type="scientific">Schizosaccharomyces pombe (strain 972 / ATCC 24843)</name>
    <name type="common">Fission yeast</name>
    <dbReference type="NCBI Taxonomy" id="284812"/>
    <lineage>
        <taxon>Eukaryota</taxon>
        <taxon>Fungi</taxon>
        <taxon>Dikarya</taxon>
        <taxon>Ascomycota</taxon>
        <taxon>Taphrinomycotina</taxon>
        <taxon>Schizosaccharomycetes</taxon>
        <taxon>Schizosaccharomycetales</taxon>
        <taxon>Schizosaccharomycetaceae</taxon>
        <taxon>Schizosaccharomyces</taxon>
    </lineage>
</organism>
<name>MUG68_SCHPO</name>
<evidence type="ECO:0000256" key="1">
    <source>
        <dbReference type="SAM" id="MobiDB-lite"/>
    </source>
</evidence>
<evidence type="ECO:0000269" key="2">
    <source>
    </source>
</evidence>
<feature type="chain" id="PRO_0000116587" description="Meiotically up-regulated gene 68 protein">
    <location>
        <begin position="1"/>
        <end position="515"/>
    </location>
</feature>
<feature type="region of interest" description="Disordered" evidence="1">
    <location>
        <begin position="165"/>
        <end position="204"/>
    </location>
</feature>
<accession>Q10310</accession>
<reference key="1">
    <citation type="journal article" date="2002" name="Nature">
        <title>The genome sequence of Schizosaccharomyces pombe.</title>
        <authorList>
            <person name="Wood V."/>
            <person name="Gwilliam R."/>
            <person name="Rajandream M.A."/>
            <person name="Lyne M.H."/>
            <person name="Lyne R."/>
            <person name="Stewart A."/>
            <person name="Sgouros J.G."/>
            <person name="Peat N."/>
            <person name="Hayles J."/>
            <person name="Baker S.G."/>
            <person name="Basham D."/>
            <person name="Bowman S."/>
            <person name="Brooks K."/>
            <person name="Brown D."/>
            <person name="Brown S."/>
            <person name="Chillingworth T."/>
            <person name="Churcher C.M."/>
            <person name="Collins M."/>
            <person name="Connor R."/>
            <person name="Cronin A."/>
            <person name="Davis P."/>
            <person name="Feltwell T."/>
            <person name="Fraser A."/>
            <person name="Gentles S."/>
            <person name="Goble A."/>
            <person name="Hamlin N."/>
            <person name="Harris D.E."/>
            <person name="Hidalgo J."/>
            <person name="Hodgson G."/>
            <person name="Holroyd S."/>
            <person name="Hornsby T."/>
            <person name="Howarth S."/>
            <person name="Huckle E.J."/>
            <person name="Hunt S."/>
            <person name="Jagels K."/>
            <person name="James K.D."/>
            <person name="Jones L."/>
            <person name="Jones M."/>
            <person name="Leather S."/>
            <person name="McDonald S."/>
            <person name="McLean J."/>
            <person name="Mooney P."/>
            <person name="Moule S."/>
            <person name="Mungall K.L."/>
            <person name="Murphy L.D."/>
            <person name="Niblett D."/>
            <person name="Odell C."/>
            <person name="Oliver K."/>
            <person name="O'Neil S."/>
            <person name="Pearson D."/>
            <person name="Quail M.A."/>
            <person name="Rabbinowitsch E."/>
            <person name="Rutherford K.M."/>
            <person name="Rutter S."/>
            <person name="Saunders D."/>
            <person name="Seeger K."/>
            <person name="Sharp S."/>
            <person name="Skelton J."/>
            <person name="Simmonds M.N."/>
            <person name="Squares R."/>
            <person name="Squares S."/>
            <person name="Stevens K."/>
            <person name="Taylor K."/>
            <person name="Taylor R.G."/>
            <person name="Tivey A."/>
            <person name="Walsh S.V."/>
            <person name="Warren T."/>
            <person name="Whitehead S."/>
            <person name="Woodward J.R."/>
            <person name="Volckaert G."/>
            <person name="Aert R."/>
            <person name="Robben J."/>
            <person name="Grymonprez B."/>
            <person name="Weltjens I."/>
            <person name="Vanstreels E."/>
            <person name="Rieger M."/>
            <person name="Schaefer M."/>
            <person name="Mueller-Auer S."/>
            <person name="Gabel C."/>
            <person name="Fuchs M."/>
            <person name="Duesterhoeft A."/>
            <person name="Fritzc C."/>
            <person name="Holzer E."/>
            <person name="Moestl D."/>
            <person name="Hilbert H."/>
            <person name="Borzym K."/>
            <person name="Langer I."/>
            <person name="Beck A."/>
            <person name="Lehrach H."/>
            <person name="Reinhardt R."/>
            <person name="Pohl T.M."/>
            <person name="Eger P."/>
            <person name="Zimmermann W."/>
            <person name="Wedler H."/>
            <person name="Wambutt R."/>
            <person name="Purnelle B."/>
            <person name="Goffeau A."/>
            <person name="Cadieu E."/>
            <person name="Dreano S."/>
            <person name="Gloux S."/>
            <person name="Lelaure V."/>
            <person name="Mottier S."/>
            <person name="Galibert F."/>
            <person name="Aves S.J."/>
            <person name="Xiang Z."/>
            <person name="Hunt C."/>
            <person name="Moore K."/>
            <person name="Hurst S.M."/>
            <person name="Lucas M."/>
            <person name="Rochet M."/>
            <person name="Gaillardin C."/>
            <person name="Tallada V.A."/>
            <person name="Garzon A."/>
            <person name="Thode G."/>
            <person name="Daga R.R."/>
            <person name="Cruzado L."/>
            <person name="Jimenez J."/>
            <person name="Sanchez M."/>
            <person name="del Rey F."/>
            <person name="Benito J."/>
            <person name="Dominguez A."/>
            <person name="Revuelta J.L."/>
            <person name="Moreno S."/>
            <person name="Armstrong J."/>
            <person name="Forsburg S.L."/>
            <person name="Cerutti L."/>
            <person name="Lowe T."/>
            <person name="McCombie W.R."/>
            <person name="Paulsen I."/>
            <person name="Potashkin J."/>
            <person name="Shpakovski G.V."/>
            <person name="Ussery D."/>
            <person name="Barrell B.G."/>
            <person name="Nurse P."/>
        </authorList>
    </citation>
    <scope>NUCLEOTIDE SEQUENCE [LARGE SCALE GENOMIC DNA]</scope>
    <source>
        <strain>972 / ATCC 24843</strain>
    </source>
</reference>
<reference key="2">
    <citation type="journal article" date="2005" name="Curr. Biol.">
        <title>A large-scale screen in S. pombe identifies seven novel genes required for critical meiotic events.</title>
        <authorList>
            <person name="Martin-Castellanos C."/>
            <person name="Blanco M."/>
            <person name="Rozalen A.E."/>
            <person name="Perez-Hidalgo L."/>
            <person name="Garcia A.I."/>
            <person name="Conde F."/>
            <person name="Mata J."/>
            <person name="Ellermeier C."/>
            <person name="Davis L."/>
            <person name="San-Segundo P."/>
            <person name="Smith G.R."/>
            <person name="Moreno S."/>
        </authorList>
    </citation>
    <scope>FUNCTION IN MEIOSIS</scope>
</reference>
<comment type="function">
    <text evidence="2">Has a role in meiosis.</text>
</comment>
<sequence length="515" mass="59035">MNTRNMFDILRKGIFKDEITQIEKILLKMEDNTYEYVDVFLEKYESQQKLLLKLTKAITEYLSNLKPQLSKQENIYVKHIKSSNEAKTELEIFNCYKEISISKEKKINSLLKLVRESAQDYTINEENDILYHSEISAKKNASPMEFGDASFDLEKQRLHFANSNLHSIESERNESSLSLDSGESEKKSEEDNGNGEQNYIPEQYERLDSPVKEKIINTCCKGKAEPPNYERIKPKAKKGNQMQKIKISKLGTAETQTEDVMNKSSQKENNDILRKHKTSVKFPTNLDALNSCTMENHEINELTATNKMNDGPITKCARETINIKNLKTSNLERNQNSPKNKRTVSYERLANSFSFNALNDYNLKKGGEKLRKKAIKRALKDRGSQDKAYGGVVQSNSRQPKVGFHVNNSSSGHNDNEGNHSLILSSKTKSPQLFNNEKKDESYSGFSNTNSYAIEETSRALMGTSKTRKPENKSKYLIKNGWFEDSLNSEIWSDANPLDWRKTDILEESTSIVYK</sequence>
<proteinExistence type="evidence at protein level"/>
<keyword id="KW-0469">Meiosis</keyword>
<keyword id="KW-1185">Reference proteome</keyword>
<protein>
    <recommendedName>
        <fullName>Meiotically up-regulated gene 68 protein</fullName>
    </recommendedName>
</protein>
<dbReference type="EMBL" id="CU329670">
    <property type="protein sequence ID" value="CAA93619.1"/>
    <property type="molecule type" value="Genomic_DNA"/>
</dbReference>
<dbReference type="PIR" id="T39031">
    <property type="entry name" value="T39031"/>
</dbReference>
<dbReference type="RefSeq" id="NP_593721.1">
    <property type="nucleotide sequence ID" value="NM_001019152.2"/>
</dbReference>
<dbReference type="SMR" id="Q10310"/>
<dbReference type="BioGRID" id="279394">
    <property type="interactions" value="1"/>
</dbReference>
<dbReference type="iPTMnet" id="Q10310"/>
<dbReference type="PaxDb" id="4896-SPAC6C3.07.1"/>
<dbReference type="EnsemblFungi" id="SPAC6C3.07.1">
    <property type="protein sequence ID" value="SPAC6C3.07.1:pep"/>
    <property type="gene ID" value="SPAC6C3.07"/>
</dbReference>
<dbReference type="GeneID" id="2542954"/>
<dbReference type="KEGG" id="spo:2542954"/>
<dbReference type="PomBase" id="SPAC6C3.07">
    <property type="gene designation" value="mug68"/>
</dbReference>
<dbReference type="VEuPathDB" id="FungiDB:SPAC6C3.07"/>
<dbReference type="HOGENOM" id="CLU_529090_0_0_1"/>
<dbReference type="InParanoid" id="Q10310"/>
<dbReference type="PRO" id="PR:Q10310"/>
<dbReference type="Proteomes" id="UP000002485">
    <property type="component" value="Chromosome I"/>
</dbReference>
<dbReference type="GO" id="GO:0051321">
    <property type="term" value="P:meiotic cell cycle"/>
    <property type="evidence" value="ECO:0007669"/>
    <property type="project" value="UniProtKB-KW"/>
</dbReference>
<gene>
    <name type="primary">mug68</name>
    <name type="ORF">SPAC6C3.07</name>
</gene>